<sequence length="163" mass="18851">MIAFIKHQVKTFGLIELFKGLAVTGKYLFKKKITVRYPEEKTPLSPRFRGHHALRRYENGEERCIACKLCEAVCPANAITIESEERDDGTRRTTQYDIDMFKCIYCGFCEEACPVDAVVETRVFEYEFHERGTHIMTKEQLLAFGDKHESQIAADRAADAKYR</sequence>
<dbReference type="EC" id="7.1.1.-" evidence="1"/>
<dbReference type="EMBL" id="CP000109">
    <property type="protein sequence ID" value="ABB41421.1"/>
    <property type="molecule type" value="Genomic_DNA"/>
</dbReference>
<dbReference type="SMR" id="Q31HF2"/>
<dbReference type="STRING" id="317025.Tcr_0825"/>
<dbReference type="KEGG" id="tcx:Tcr_0825"/>
<dbReference type="eggNOG" id="COG1143">
    <property type="taxonomic scope" value="Bacteria"/>
</dbReference>
<dbReference type="HOGENOM" id="CLU_067218_5_1_6"/>
<dbReference type="OrthoDB" id="9808559at2"/>
<dbReference type="GO" id="GO:0005886">
    <property type="term" value="C:plasma membrane"/>
    <property type="evidence" value="ECO:0007669"/>
    <property type="project" value="UniProtKB-SubCell"/>
</dbReference>
<dbReference type="GO" id="GO:0051539">
    <property type="term" value="F:4 iron, 4 sulfur cluster binding"/>
    <property type="evidence" value="ECO:0007669"/>
    <property type="project" value="UniProtKB-KW"/>
</dbReference>
<dbReference type="GO" id="GO:0005506">
    <property type="term" value="F:iron ion binding"/>
    <property type="evidence" value="ECO:0007669"/>
    <property type="project" value="UniProtKB-UniRule"/>
</dbReference>
<dbReference type="GO" id="GO:0050136">
    <property type="term" value="F:NADH:ubiquinone reductase (non-electrogenic) activity"/>
    <property type="evidence" value="ECO:0007669"/>
    <property type="project" value="UniProtKB-UniRule"/>
</dbReference>
<dbReference type="GO" id="GO:0048038">
    <property type="term" value="F:quinone binding"/>
    <property type="evidence" value="ECO:0007669"/>
    <property type="project" value="UniProtKB-KW"/>
</dbReference>
<dbReference type="GO" id="GO:0009060">
    <property type="term" value="P:aerobic respiration"/>
    <property type="evidence" value="ECO:0007669"/>
    <property type="project" value="TreeGrafter"/>
</dbReference>
<dbReference type="FunFam" id="3.30.70.3270:FF:000003">
    <property type="entry name" value="NADH-quinone oxidoreductase subunit I"/>
    <property type="match status" value="1"/>
</dbReference>
<dbReference type="Gene3D" id="3.30.70.3270">
    <property type="match status" value="1"/>
</dbReference>
<dbReference type="HAMAP" id="MF_01351">
    <property type="entry name" value="NDH1_NuoI"/>
    <property type="match status" value="1"/>
</dbReference>
<dbReference type="InterPro" id="IPR017896">
    <property type="entry name" value="4Fe4S_Fe-S-bd"/>
</dbReference>
<dbReference type="InterPro" id="IPR017900">
    <property type="entry name" value="4Fe4S_Fe_S_CS"/>
</dbReference>
<dbReference type="InterPro" id="IPR010226">
    <property type="entry name" value="NADH_quinone_OxRdtase_chainI"/>
</dbReference>
<dbReference type="NCBIfam" id="TIGR01971">
    <property type="entry name" value="NuoI"/>
    <property type="match status" value="1"/>
</dbReference>
<dbReference type="NCBIfam" id="NF004538">
    <property type="entry name" value="PRK05888.1-4"/>
    <property type="match status" value="1"/>
</dbReference>
<dbReference type="NCBIfam" id="NF004539">
    <property type="entry name" value="PRK05888.1-5"/>
    <property type="match status" value="1"/>
</dbReference>
<dbReference type="PANTHER" id="PTHR10849:SF20">
    <property type="entry name" value="NADH DEHYDROGENASE [UBIQUINONE] IRON-SULFUR PROTEIN 8, MITOCHONDRIAL"/>
    <property type="match status" value="1"/>
</dbReference>
<dbReference type="PANTHER" id="PTHR10849">
    <property type="entry name" value="NADH DEHYDROGENASE UBIQUINONE IRON-SULFUR PROTEIN 8, MITOCHONDRIAL"/>
    <property type="match status" value="1"/>
</dbReference>
<dbReference type="Pfam" id="PF12838">
    <property type="entry name" value="Fer4_7"/>
    <property type="match status" value="1"/>
</dbReference>
<dbReference type="SUPFAM" id="SSF54862">
    <property type="entry name" value="4Fe-4S ferredoxins"/>
    <property type="match status" value="1"/>
</dbReference>
<dbReference type="PROSITE" id="PS00198">
    <property type="entry name" value="4FE4S_FER_1"/>
    <property type="match status" value="2"/>
</dbReference>
<dbReference type="PROSITE" id="PS51379">
    <property type="entry name" value="4FE4S_FER_2"/>
    <property type="match status" value="2"/>
</dbReference>
<evidence type="ECO:0000255" key="1">
    <source>
        <dbReference type="HAMAP-Rule" id="MF_01351"/>
    </source>
</evidence>
<organism>
    <name type="scientific">Hydrogenovibrio crunogenus (strain DSM 25203 / XCL-2)</name>
    <name type="common">Thiomicrospira crunogena</name>
    <dbReference type="NCBI Taxonomy" id="317025"/>
    <lineage>
        <taxon>Bacteria</taxon>
        <taxon>Pseudomonadati</taxon>
        <taxon>Pseudomonadota</taxon>
        <taxon>Gammaproteobacteria</taxon>
        <taxon>Thiotrichales</taxon>
        <taxon>Piscirickettsiaceae</taxon>
        <taxon>Hydrogenovibrio</taxon>
    </lineage>
</organism>
<gene>
    <name evidence="1" type="primary">nuoI</name>
    <name type="ordered locus">Tcr_0825</name>
</gene>
<feature type="chain" id="PRO_0000250948" description="NADH-quinone oxidoreductase subunit I">
    <location>
        <begin position="1"/>
        <end position="163"/>
    </location>
</feature>
<feature type="domain" description="4Fe-4S ferredoxin-type 1" evidence="1">
    <location>
        <begin position="55"/>
        <end position="84"/>
    </location>
</feature>
<feature type="domain" description="4Fe-4S ferredoxin-type 2" evidence="1">
    <location>
        <begin position="94"/>
        <end position="123"/>
    </location>
</feature>
<feature type="binding site" evidence="1">
    <location>
        <position position="64"/>
    </location>
    <ligand>
        <name>[4Fe-4S] cluster</name>
        <dbReference type="ChEBI" id="CHEBI:49883"/>
        <label>1</label>
    </ligand>
</feature>
<feature type="binding site" evidence="1">
    <location>
        <position position="67"/>
    </location>
    <ligand>
        <name>[4Fe-4S] cluster</name>
        <dbReference type="ChEBI" id="CHEBI:49883"/>
        <label>1</label>
    </ligand>
</feature>
<feature type="binding site" evidence="1">
    <location>
        <position position="70"/>
    </location>
    <ligand>
        <name>[4Fe-4S] cluster</name>
        <dbReference type="ChEBI" id="CHEBI:49883"/>
        <label>1</label>
    </ligand>
</feature>
<feature type="binding site" evidence="1">
    <location>
        <position position="74"/>
    </location>
    <ligand>
        <name>[4Fe-4S] cluster</name>
        <dbReference type="ChEBI" id="CHEBI:49883"/>
        <label>2</label>
    </ligand>
</feature>
<feature type="binding site" evidence="1">
    <location>
        <position position="103"/>
    </location>
    <ligand>
        <name>[4Fe-4S] cluster</name>
        <dbReference type="ChEBI" id="CHEBI:49883"/>
        <label>2</label>
    </ligand>
</feature>
<feature type="binding site" evidence="1">
    <location>
        <position position="106"/>
    </location>
    <ligand>
        <name>[4Fe-4S] cluster</name>
        <dbReference type="ChEBI" id="CHEBI:49883"/>
        <label>2</label>
    </ligand>
</feature>
<feature type="binding site" evidence="1">
    <location>
        <position position="109"/>
    </location>
    <ligand>
        <name>[4Fe-4S] cluster</name>
        <dbReference type="ChEBI" id="CHEBI:49883"/>
        <label>2</label>
    </ligand>
</feature>
<feature type="binding site" evidence="1">
    <location>
        <position position="113"/>
    </location>
    <ligand>
        <name>[4Fe-4S] cluster</name>
        <dbReference type="ChEBI" id="CHEBI:49883"/>
        <label>1</label>
    </ligand>
</feature>
<keyword id="KW-0004">4Fe-4S</keyword>
<keyword id="KW-0997">Cell inner membrane</keyword>
<keyword id="KW-1003">Cell membrane</keyword>
<keyword id="KW-0408">Iron</keyword>
<keyword id="KW-0411">Iron-sulfur</keyword>
<keyword id="KW-0472">Membrane</keyword>
<keyword id="KW-0479">Metal-binding</keyword>
<keyword id="KW-0520">NAD</keyword>
<keyword id="KW-0874">Quinone</keyword>
<keyword id="KW-0677">Repeat</keyword>
<keyword id="KW-1278">Translocase</keyword>
<keyword id="KW-0830">Ubiquinone</keyword>
<proteinExistence type="inferred from homology"/>
<protein>
    <recommendedName>
        <fullName evidence="1">NADH-quinone oxidoreductase subunit I</fullName>
        <ecNumber evidence="1">7.1.1.-</ecNumber>
    </recommendedName>
    <alternativeName>
        <fullName evidence="1">NADH dehydrogenase I subunit I</fullName>
    </alternativeName>
    <alternativeName>
        <fullName evidence="1">NDH-1 subunit I</fullName>
    </alternativeName>
</protein>
<name>NUOI_HYDCU</name>
<comment type="function">
    <text evidence="1">NDH-1 shuttles electrons from NADH, via FMN and iron-sulfur (Fe-S) centers, to quinones in the respiratory chain. The immediate electron acceptor for the enzyme in this species is believed to be ubiquinone. Couples the redox reaction to proton translocation (for every two electrons transferred, four hydrogen ions are translocated across the cytoplasmic membrane), and thus conserves the redox energy in a proton gradient.</text>
</comment>
<comment type="catalytic activity">
    <reaction evidence="1">
        <text>a quinone + NADH + 5 H(+)(in) = a quinol + NAD(+) + 4 H(+)(out)</text>
        <dbReference type="Rhea" id="RHEA:57888"/>
        <dbReference type="ChEBI" id="CHEBI:15378"/>
        <dbReference type="ChEBI" id="CHEBI:24646"/>
        <dbReference type="ChEBI" id="CHEBI:57540"/>
        <dbReference type="ChEBI" id="CHEBI:57945"/>
        <dbReference type="ChEBI" id="CHEBI:132124"/>
    </reaction>
</comment>
<comment type="cofactor">
    <cofactor evidence="1">
        <name>[4Fe-4S] cluster</name>
        <dbReference type="ChEBI" id="CHEBI:49883"/>
    </cofactor>
    <text evidence="1">Binds 2 [4Fe-4S] clusters per subunit.</text>
</comment>
<comment type="subunit">
    <text evidence="1">NDH-1 is composed of 14 different subunits. Subunits NuoA, H, J, K, L, M, N constitute the membrane sector of the complex.</text>
</comment>
<comment type="subcellular location">
    <subcellularLocation>
        <location evidence="1">Cell inner membrane</location>
        <topology evidence="1">Peripheral membrane protein</topology>
    </subcellularLocation>
</comment>
<comment type="similarity">
    <text evidence="1">Belongs to the complex I 23 kDa subunit family.</text>
</comment>
<reference key="1">
    <citation type="journal article" date="2006" name="PLoS Biol.">
        <title>The genome of deep-sea vent chemolithoautotroph Thiomicrospira crunogena XCL-2.</title>
        <authorList>
            <person name="Scott K.M."/>
            <person name="Sievert S.M."/>
            <person name="Abril F.N."/>
            <person name="Ball L.A."/>
            <person name="Barrett C.J."/>
            <person name="Blake R.A."/>
            <person name="Boller A.J."/>
            <person name="Chain P.S.G."/>
            <person name="Clark J.A."/>
            <person name="Davis C.R."/>
            <person name="Detter C."/>
            <person name="Do K.F."/>
            <person name="Dobrinski K.P."/>
            <person name="Faza B.I."/>
            <person name="Fitzpatrick K.A."/>
            <person name="Freyermuth S.K."/>
            <person name="Harmer T.L."/>
            <person name="Hauser L.J."/>
            <person name="Huegler M."/>
            <person name="Kerfeld C.A."/>
            <person name="Klotz M.G."/>
            <person name="Kong W.W."/>
            <person name="Land M."/>
            <person name="Lapidus A."/>
            <person name="Larimer F.W."/>
            <person name="Longo D.L."/>
            <person name="Lucas S."/>
            <person name="Malfatti S.A."/>
            <person name="Massey S.E."/>
            <person name="Martin D.D."/>
            <person name="McCuddin Z."/>
            <person name="Meyer F."/>
            <person name="Moore J.L."/>
            <person name="Ocampo L.H. Jr."/>
            <person name="Paul J.H."/>
            <person name="Paulsen I.T."/>
            <person name="Reep D.K."/>
            <person name="Ren Q."/>
            <person name="Ross R.L."/>
            <person name="Sato P.Y."/>
            <person name="Thomas P."/>
            <person name="Tinkham L.E."/>
            <person name="Zeruth G.T."/>
        </authorList>
    </citation>
    <scope>NUCLEOTIDE SEQUENCE [LARGE SCALE GENOMIC DNA]</scope>
    <source>
        <strain>DSM 25203 / XCL-2</strain>
    </source>
</reference>
<accession>Q31HF2</accession>